<protein>
    <recommendedName>
        <fullName evidence="1">Probable phosphatase YcdX</fullName>
        <ecNumber evidence="1">3.1.3.-</ecNumber>
    </recommendedName>
</protein>
<organism>
    <name type="scientific">Salmonella paratyphi B (strain ATCC BAA-1250 / SPB7)</name>
    <dbReference type="NCBI Taxonomy" id="1016998"/>
    <lineage>
        <taxon>Bacteria</taxon>
        <taxon>Pseudomonadati</taxon>
        <taxon>Pseudomonadota</taxon>
        <taxon>Gammaproteobacteria</taxon>
        <taxon>Enterobacterales</taxon>
        <taxon>Enterobacteriaceae</taxon>
        <taxon>Salmonella</taxon>
    </lineage>
</organism>
<proteinExistence type="inferred from homology"/>
<gene>
    <name evidence="1" type="primary">ycdX</name>
    <name type="ordered locus">SPAB_02400</name>
</gene>
<keyword id="KW-0378">Hydrolase</keyword>
<keyword id="KW-0479">Metal-binding</keyword>
<keyword id="KW-0862">Zinc</keyword>
<feature type="chain" id="PRO_1000087808" description="Probable phosphatase YcdX">
    <location>
        <begin position="1"/>
        <end position="245"/>
    </location>
</feature>
<feature type="binding site" evidence="1">
    <location>
        <position position="7"/>
    </location>
    <ligand>
        <name>Zn(2+)</name>
        <dbReference type="ChEBI" id="CHEBI:29105"/>
        <label>1</label>
    </ligand>
</feature>
<feature type="binding site" evidence="1">
    <location>
        <position position="9"/>
    </location>
    <ligand>
        <name>Zn(2+)</name>
        <dbReference type="ChEBI" id="CHEBI:29105"/>
        <label>1</label>
    </ligand>
</feature>
<feature type="binding site" evidence="1">
    <location>
        <position position="15"/>
    </location>
    <ligand>
        <name>Zn(2+)</name>
        <dbReference type="ChEBI" id="CHEBI:29105"/>
        <label>2</label>
    </ligand>
</feature>
<feature type="binding site" evidence="1">
    <location>
        <position position="40"/>
    </location>
    <ligand>
        <name>Zn(2+)</name>
        <dbReference type="ChEBI" id="CHEBI:29105"/>
        <label>2</label>
    </ligand>
</feature>
<feature type="binding site" evidence="1">
    <location>
        <position position="73"/>
    </location>
    <ligand>
        <name>Zn(2+)</name>
        <dbReference type="ChEBI" id="CHEBI:29105"/>
        <label>1</label>
    </ligand>
</feature>
<feature type="binding site" evidence="1">
    <location>
        <position position="73"/>
    </location>
    <ligand>
        <name>Zn(2+)</name>
        <dbReference type="ChEBI" id="CHEBI:29105"/>
        <label>3</label>
    </ligand>
</feature>
<feature type="binding site" evidence="1">
    <location>
        <position position="101"/>
    </location>
    <ligand>
        <name>Zn(2+)</name>
        <dbReference type="ChEBI" id="CHEBI:29105"/>
        <label>3</label>
    </ligand>
</feature>
<feature type="binding site" evidence="1">
    <location>
        <position position="131"/>
    </location>
    <ligand>
        <name>Zn(2+)</name>
        <dbReference type="ChEBI" id="CHEBI:29105"/>
        <label>3</label>
    </ligand>
</feature>
<feature type="binding site" evidence="1">
    <location>
        <position position="192"/>
    </location>
    <ligand>
        <name>Zn(2+)</name>
        <dbReference type="ChEBI" id="CHEBI:29105"/>
        <label>1</label>
    </ligand>
</feature>
<feature type="binding site" evidence="1">
    <location>
        <position position="194"/>
    </location>
    <ligand>
        <name>Zn(2+)</name>
        <dbReference type="ChEBI" id="CHEBI:29105"/>
        <label>2</label>
    </ligand>
</feature>
<dbReference type="EC" id="3.1.3.-" evidence="1"/>
<dbReference type="EMBL" id="CP000886">
    <property type="protein sequence ID" value="ABX67782.1"/>
    <property type="molecule type" value="Genomic_DNA"/>
</dbReference>
<dbReference type="RefSeq" id="WP_000283643.1">
    <property type="nucleotide sequence ID" value="NC_010102.1"/>
</dbReference>
<dbReference type="SMR" id="A9N5T2"/>
<dbReference type="KEGG" id="spq:SPAB_02400"/>
<dbReference type="PATRIC" id="fig|1016998.12.peg.2272"/>
<dbReference type="HOGENOM" id="CLU_061999_0_1_6"/>
<dbReference type="BioCyc" id="SENT1016998:SPAB_RS09775-MONOMER"/>
<dbReference type="Proteomes" id="UP000008556">
    <property type="component" value="Chromosome"/>
</dbReference>
<dbReference type="GO" id="GO:0005829">
    <property type="term" value="C:cytosol"/>
    <property type="evidence" value="ECO:0007669"/>
    <property type="project" value="TreeGrafter"/>
</dbReference>
<dbReference type="GO" id="GO:0016791">
    <property type="term" value="F:phosphatase activity"/>
    <property type="evidence" value="ECO:0007669"/>
    <property type="project" value="UniProtKB-UniRule"/>
</dbReference>
<dbReference type="GO" id="GO:0008270">
    <property type="term" value="F:zinc ion binding"/>
    <property type="evidence" value="ECO:0007669"/>
    <property type="project" value="UniProtKB-UniRule"/>
</dbReference>
<dbReference type="GO" id="GO:0071978">
    <property type="term" value="P:bacterial-type flagellum-dependent swarming motility"/>
    <property type="evidence" value="ECO:0007669"/>
    <property type="project" value="TreeGrafter"/>
</dbReference>
<dbReference type="CDD" id="cd07437">
    <property type="entry name" value="PHP_HisPPase_Ycdx_like"/>
    <property type="match status" value="1"/>
</dbReference>
<dbReference type="FunFam" id="3.20.20.140:FF:000008">
    <property type="entry name" value="Probable phosphatase YcdX"/>
    <property type="match status" value="1"/>
</dbReference>
<dbReference type="Gene3D" id="3.20.20.140">
    <property type="entry name" value="Metal-dependent hydrolases"/>
    <property type="match status" value="1"/>
</dbReference>
<dbReference type="HAMAP" id="MF_01561">
    <property type="entry name" value="YcdX_phosphat"/>
    <property type="match status" value="1"/>
</dbReference>
<dbReference type="InterPro" id="IPR023710">
    <property type="entry name" value="Phosphatase_YcdX_put"/>
</dbReference>
<dbReference type="InterPro" id="IPR004013">
    <property type="entry name" value="PHP_dom"/>
</dbReference>
<dbReference type="InterPro" id="IPR050243">
    <property type="entry name" value="PHP_phosphatase"/>
</dbReference>
<dbReference type="InterPro" id="IPR003141">
    <property type="entry name" value="Pol/His_phosphatase_N"/>
</dbReference>
<dbReference type="InterPro" id="IPR016195">
    <property type="entry name" value="Pol/histidinol_Pase-like"/>
</dbReference>
<dbReference type="NCBIfam" id="NF006702">
    <property type="entry name" value="PRK09248.1"/>
    <property type="match status" value="1"/>
</dbReference>
<dbReference type="PANTHER" id="PTHR36928">
    <property type="entry name" value="PHOSPHATASE YCDX-RELATED"/>
    <property type="match status" value="1"/>
</dbReference>
<dbReference type="PANTHER" id="PTHR36928:SF1">
    <property type="entry name" value="PHOSPHATASE YCDX-RELATED"/>
    <property type="match status" value="1"/>
</dbReference>
<dbReference type="Pfam" id="PF02811">
    <property type="entry name" value="PHP"/>
    <property type="match status" value="1"/>
</dbReference>
<dbReference type="SMART" id="SM00481">
    <property type="entry name" value="POLIIIAc"/>
    <property type="match status" value="1"/>
</dbReference>
<dbReference type="SUPFAM" id="SSF89550">
    <property type="entry name" value="PHP domain-like"/>
    <property type="match status" value="1"/>
</dbReference>
<reference key="1">
    <citation type="submission" date="2007-11" db="EMBL/GenBank/DDBJ databases">
        <authorList>
            <consortium name="The Salmonella enterica serovar Paratyphi B Genome Sequencing Project"/>
            <person name="McClelland M."/>
            <person name="Sanderson E.K."/>
            <person name="Porwollik S."/>
            <person name="Spieth J."/>
            <person name="Clifton W.S."/>
            <person name="Fulton R."/>
            <person name="Cordes M."/>
            <person name="Wollam A."/>
            <person name="Shah N."/>
            <person name="Pepin K."/>
            <person name="Bhonagiri V."/>
            <person name="Nash W."/>
            <person name="Johnson M."/>
            <person name="Thiruvilangam P."/>
            <person name="Wilson R."/>
        </authorList>
    </citation>
    <scope>NUCLEOTIDE SEQUENCE [LARGE SCALE GENOMIC DNA]</scope>
    <source>
        <strain>ATCC BAA-1250 / SPB7</strain>
    </source>
</reference>
<comment type="cofactor">
    <cofactor evidence="1">
        <name>Zn(2+)</name>
        <dbReference type="ChEBI" id="CHEBI:29105"/>
    </cofactor>
    <text evidence="1">Binds 3 Zn(2+) ions per subunit.</text>
</comment>
<comment type="subunit">
    <text evidence="1">Homotrimer.</text>
</comment>
<comment type="similarity">
    <text evidence="1">Belongs to the PHP family.</text>
</comment>
<name>YCDX_SALPB</name>
<accession>A9N5T2</accession>
<sequence>MYPVDLHMHTVASTHAYSTLSDYIAEAKRKGIKLFAITDHGPDMEDAPHHWHFINMRIWPRLVDGVGILRGIEANIKNINGEIDCSGKMFDSLDLIIAGFHEPVFAPHDKETNTQAMIATIASGKVHIISHPGNPKYPVEVKAIAQAAAKHHVALEINNSSFLHSRKGSEDNCRAVAAAVRDAGGWVALGSDSHTAFTLGDFTECRKILDAVNFPEDRILNVSPQRLLAFLESRGMAPVPEFAEL</sequence>
<evidence type="ECO:0000255" key="1">
    <source>
        <dbReference type="HAMAP-Rule" id="MF_01561"/>
    </source>
</evidence>